<gene>
    <name evidence="1" type="primary">leuB</name>
    <name type="ordered locus">CMM_1104</name>
</gene>
<reference key="1">
    <citation type="journal article" date="2008" name="J. Bacteriol.">
        <title>The genome sequence of the tomato-pathogenic actinomycete Clavibacter michiganensis subsp. michiganensis NCPPB382 reveals a large island involved in pathogenicity.</title>
        <authorList>
            <person name="Gartemann K.-H."/>
            <person name="Abt B."/>
            <person name="Bekel T."/>
            <person name="Burger A."/>
            <person name="Engemann J."/>
            <person name="Fluegel M."/>
            <person name="Gaigalat L."/>
            <person name="Goesmann A."/>
            <person name="Graefen I."/>
            <person name="Kalinowski J."/>
            <person name="Kaup O."/>
            <person name="Kirchner O."/>
            <person name="Krause L."/>
            <person name="Linke B."/>
            <person name="McHardy A."/>
            <person name="Meyer F."/>
            <person name="Pohle S."/>
            <person name="Rueckert C."/>
            <person name="Schneiker S."/>
            <person name="Zellermann E.-M."/>
            <person name="Puehler A."/>
            <person name="Eichenlaub R."/>
            <person name="Kaiser O."/>
            <person name="Bartels D."/>
        </authorList>
    </citation>
    <scope>NUCLEOTIDE SEQUENCE [LARGE SCALE GENOMIC DNA]</scope>
    <source>
        <strain>NCPPB 382</strain>
    </source>
</reference>
<comment type="function">
    <text evidence="1">Catalyzes the oxidation of 3-carboxy-2-hydroxy-4-methylpentanoate (3-isopropylmalate) to 3-carboxy-4-methyl-2-oxopentanoate. The product decarboxylates to 4-methyl-2 oxopentanoate.</text>
</comment>
<comment type="catalytic activity">
    <reaction evidence="1">
        <text>(2R,3S)-3-isopropylmalate + NAD(+) = 4-methyl-2-oxopentanoate + CO2 + NADH</text>
        <dbReference type="Rhea" id="RHEA:32271"/>
        <dbReference type="ChEBI" id="CHEBI:16526"/>
        <dbReference type="ChEBI" id="CHEBI:17865"/>
        <dbReference type="ChEBI" id="CHEBI:35121"/>
        <dbReference type="ChEBI" id="CHEBI:57540"/>
        <dbReference type="ChEBI" id="CHEBI:57945"/>
        <dbReference type="EC" id="1.1.1.85"/>
    </reaction>
</comment>
<comment type="cofactor">
    <cofactor evidence="1">
        <name>Mg(2+)</name>
        <dbReference type="ChEBI" id="CHEBI:18420"/>
    </cofactor>
    <cofactor evidence="1">
        <name>Mn(2+)</name>
        <dbReference type="ChEBI" id="CHEBI:29035"/>
    </cofactor>
    <text evidence="1">Binds 1 Mg(2+) or Mn(2+) ion per subunit.</text>
</comment>
<comment type="pathway">
    <text evidence="1">Amino-acid biosynthesis; L-leucine biosynthesis; L-leucine from 3-methyl-2-oxobutanoate: step 3/4.</text>
</comment>
<comment type="subunit">
    <text evidence="1">Homodimer.</text>
</comment>
<comment type="subcellular location">
    <subcellularLocation>
        <location evidence="1">Cytoplasm</location>
    </subcellularLocation>
</comment>
<comment type="similarity">
    <text evidence="1">Belongs to the isocitrate and isopropylmalate dehydrogenases family. LeuB type 2 subfamily.</text>
</comment>
<protein>
    <recommendedName>
        <fullName evidence="1">3-isopropylmalate dehydrogenase</fullName>
        <ecNumber evidence="1">1.1.1.85</ecNumber>
    </recommendedName>
    <alternativeName>
        <fullName evidence="1">3-IPM-DH</fullName>
    </alternativeName>
    <alternativeName>
        <fullName evidence="1">Beta-IPM dehydrogenase</fullName>
        <shortName evidence="1">IMDH</shortName>
    </alternativeName>
</protein>
<organism>
    <name type="scientific">Clavibacter michiganensis subsp. michiganensis (strain NCPPB 382)</name>
    <dbReference type="NCBI Taxonomy" id="443906"/>
    <lineage>
        <taxon>Bacteria</taxon>
        <taxon>Bacillati</taxon>
        <taxon>Actinomycetota</taxon>
        <taxon>Actinomycetes</taxon>
        <taxon>Micrococcales</taxon>
        <taxon>Microbacteriaceae</taxon>
        <taxon>Clavibacter</taxon>
    </lineage>
</organism>
<evidence type="ECO:0000255" key="1">
    <source>
        <dbReference type="HAMAP-Rule" id="MF_01035"/>
    </source>
</evidence>
<accession>A5CPZ4</accession>
<keyword id="KW-0028">Amino-acid biosynthesis</keyword>
<keyword id="KW-0100">Branched-chain amino acid biosynthesis</keyword>
<keyword id="KW-0963">Cytoplasm</keyword>
<keyword id="KW-0432">Leucine biosynthesis</keyword>
<keyword id="KW-0460">Magnesium</keyword>
<keyword id="KW-0464">Manganese</keyword>
<keyword id="KW-0479">Metal-binding</keyword>
<keyword id="KW-0520">NAD</keyword>
<keyword id="KW-0560">Oxidoreductase</keyword>
<name>LEU3_CLAM3</name>
<sequence length="355" mass="37179">MPRTISLAVVPGDGIGPEVVHEALRVLREAVPADVSLDTTQYPFGAGHFLETGEILTDSDLAALAQHDAILLGAVGGDPRDARLAGGIIERGLLLKLRFAFDHYINLRPTTLLPGVTSPLASPGEVDFVVVREGTEGPYAGNGGVLRRGTEHEIATEVSVNTAHGVERTVRFAFDLASKRERKRVTLVHKTNVLTFAGSLWQRTVDRVAAEHPDVAVDYLHVDATMIFLVTDPSRFDVIVSDNLFGDIITDLAAAISGGIGLAASGNVNPTGAFPSMFEPVHGSAPDIAGQQKADPTAAILSVSLLLDHLGLPEAAARVTAAVSADLAARAAGDPAPRSTAEVGDAVIRALSTNH</sequence>
<dbReference type="EC" id="1.1.1.85" evidence="1"/>
<dbReference type="EMBL" id="AM711867">
    <property type="protein sequence ID" value="CAN01147.1"/>
    <property type="molecule type" value="Genomic_DNA"/>
</dbReference>
<dbReference type="RefSeq" id="WP_012037790.1">
    <property type="nucleotide sequence ID" value="NC_009480.1"/>
</dbReference>
<dbReference type="SMR" id="A5CPZ4"/>
<dbReference type="KEGG" id="cmi:CMM_1104"/>
<dbReference type="eggNOG" id="COG0473">
    <property type="taxonomic scope" value="Bacteria"/>
</dbReference>
<dbReference type="HOGENOM" id="CLU_031953_0_1_11"/>
<dbReference type="OrthoDB" id="5289857at2"/>
<dbReference type="UniPathway" id="UPA00048">
    <property type="reaction ID" value="UER00072"/>
</dbReference>
<dbReference type="Proteomes" id="UP000001564">
    <property type="component" value="Chromosome"/>
</dbReference>
<dbReference type="GO" id="GO:0005737">
    <property type="term" value="C:cytoplasm"/>
    <property type="evidence" value="ECO:0007669"/>
    <property type="project" value="UniProtKB-SubCell"/>
</dbReference>
<dbReference type="GO" id="GO:0003862">
    <property type="term" value="F:3-isopropylmalate dehydrogenase activity"/>
    <property type="evidence" value="ECO:0007669"/>
    <property type="project" value="UniProtKB-UniRule"/>
</dbReference>
<dbReference type="GO" id="GO:0000287">
    <property type="term" value="F:magnesium ion binding"/>
    <property type="evidence" value="ECO:0007669"/>
    <property type="project" value="InterPro"/>
</dbReference>
<dbReference type="GO" id="GO:0051287">
    <property type="term" value="F:NAD binding"/>
    <property type="evidence" value="ECO:0007669"/>
    <property type="project" value="InterPro"/>
</dbReference>
<dbReference type="GO" id="GO:0009098">
    <property type="term" value="P:L-leucine biosynthetic process"/>
    <property type="evidence" value="ECO:0007669"/>
    <property type="project" value="UniProtKB-UniRule"/>
</dbReference>
<dbReference type="Gene3D" id="3.40.718.10">
    <property type="entry name" value="Isopropylmalate Dehydrogenase"/>
    <property type="match status" value="1"/>
</dbReference>
<dbReference type="HAMAP" id="MF_01035">
    <property type="entry name" value="LeuB_type2"/>
    <property type="match status" value="1"/>
</dbReference>
<dbReference type="InterPro" id="IPR050501">
    <property type="entry name" value="ICDH/IPMDH"/>
</dbReference>
<dbReference type="InterPro" id="IPR019818">
    <property type="entry name" value="IsoCit/isopropylmalate_DH_CS"/>
</dbReference>
<dbReference type="InterPro" id="IPR024084">
    <property type="entry name" value="IsoPropMal-DH-like_dom"/>
</dbReference>
<dbReference type="InterPro" id="IPR023698">
    <property type="entry name" value="LeuB_actb"/>
</dbReference>
<dbReference type="NCBIfam" id="NF002898">
    <property type="entry name" value="PRK03437.1"/>
    <property type="match status" value="1"/>
</dbReference>
<dbReference type="PANTHER" id="PTHR43275">
    <property type="entry name" value="D-MALATE DEHYDROGENASE [DECARBOXYLATING]"/>
    <property type="match status" value="1"/>
</dbReference>
<dbReference type="PANTHER" id="PTHR43275:SF1">
    <property type="entry name" value="D-MALATE DEHYDROGENASE [DECARBOXYLATING]"/>
    <property type="match status" value="1"/>
</dbReference>
<dbReference type="Pfam" id="PF00180">
    <property type="entry name" value="Iso_dh"/>
    <property type="match status" value="1"/>
</dbReference>
<dbReference type="SMART" id="SM01329">
    <property type="entry name" value="Iso_dh"/>
    <property type="match status" value="1"/>
</dbReference>
<dbReference type="SUPFAM" id="SSF53659">
    <property type="entry name" value="Isocitrate/Isopropylmalate dehydrogenase-like"/>
    <property type="match status" value="1"/>
</dbReference>
<dbReference type="PROSITE" id="PS00470">
    <property type="entry name" value="IDH_IMDH"/>
    <property type="match status" value="1"/>
</dbReference>
<feature type="chain" id="PRO_1000063869" description="3-isopropylmalate dehydrogenase">
    <location>
        <begin position="1"/>
        <end position="355"/>
    </location>
</feature>
<feature type="binding site" evidence="1">
    <location>
        <position position="98"/>
    </location>
    <ligand>
        <name>substrate</name>
    </ligand>
</feature>
<feature type="binding site" evidence="1">
    <location>
        <position position="108"/>
    </location>
    <ligand>
        <name>substrate</name>
    </ligand>
</feature>
<feature type="binding site" evidence="1">
    <location>
        <position position="132"/>
    </location>
    <ligand>
        <name>substrate</name>
    </ligand>
</feature>
<feature type="binding site" evidence="1">
    <location>
        <position position="223"/>
    </location>
    <ligand>
        <name>Mg(2+)</name>
        <dbReference type="ChEBI" id="CHEBI:18420"/>
    </ligand>
</feature>
<feature type="binding site" evidence="1">
    <location>
        <position position="223"/>
    </location>
    <ligand>
        <name>substrate</name>
    </ligand>
</feature>
<feature type="binding site" evidence="1">
    <location>
        <position position="247"/>
    </location>
    <ligand>
        <name>Mg(2+)</name>
        <dbReference type="ChEBI" id="CHEBI:18420"/>
    </ligand>
</feature>
<feature type="binding site" evidence="1">
    <location>
        <position position="251"/>
    </location>
    <ligand>
        <name>Mg(2+)</name>
        <dbReference type="ChEBI" id="CHEBI:18420"/>
    </ligand>
</feature>
<feature type="binding site" evidence="1">
    <location>
        <begin position="283"/>
        <end position="295"/>
    </location>
    <ligand>
        <name>NAD(+)</name>
        <dbReference type="ChEBI" id="CHEBI:57540"/>
    </ligand>
</feature>
<feature type="site" description="Important for catalysis" evidence="1">
    <location>
        <position position="139"/>
    </location>
</feature>
<feature type="site" description="Important for catalysis" evidence="1">
    <location>
        <position position="190"/>
    </location>
</feature>
<proteinExistence type="inferred from homology"/>